<proteinExistence type="inferred from homology"/>
<protein>
    <recommendedName>
        <fullName evidence="1">Large ribosomal subunit protein uL24</fullName>
    </recommendedName>
    <alternativeName>
        <fullName evidence="2">50S ribosomal protein L24</fullName>
    </alternativeName>
</protein>
<sequence>MNKIRKGDDIIVLTGRDKGKRGKIALRKDDSYVLVEGINVVKKHTKPNPLKGTVGGIVEKSMPIHQSNVAIFNVATGKADRVGIKLAADGKRVRVYKSSGEEIKVA</sequence>
<name>RL24_ALBFT</name>
<evidence type="ECO:0000255" key="1">
    <source>
        <dbReference type="HAMAP-Rule" id="MF_01326"/>
    </source>
</evidence>
<evidence type="ECO:0000305" key="2"/>
<reference key="1">
    <citation type="submission" date="2006-02" db="EMBL/GenBank/DDBJ databases">
        <title>Complete sequence of chromosome of Rhodoferax ferrireducens DSM 15236.</title>
        <authorList>
            <person name="Copeland A."/>
            <person name="Lucas S."/>
            <person name="Lapidus A."/>
            <person name="Barry K."/>
            <person name="Detter J.C."/>
            <person name="Glavina del Rio T."/>
            <person name="Hammon N."/>
            <person name="Israni S."/>
            <person name="Pitluck S."/>
            <person name="Brettin T."/>
            <person name="Bruce D."/>
            <person name="Han C."/>
            <person name="Tapia R."/>
            <person name="Gilna P."/>
            <person name="Kiss H."/>
            <person name="Schmutz J."/>
            <person name="Larimer F."/>
            <person name="Land M."/>
            <person name="Kyrpides N."/>
            <person name="Ivanova N."/>
            <person name="Richardson P."/>
        </authorList>
    </citation>
    <scope>NUCLEOTIDE SEQUENCE [LARGE SCALE GENOMIC DNA]</scope>
    <source>
        <strain>ATCC BAA-621 / DSM 15236 / T118</strain>
    </source>
</reference>
<organism>
    <name type="scientific">Albidiferax ferrireducens (strain ATCC BAA-621 / DSM 15236 / T118)</name>
    <name type="common">Rhodoferax ferrireducens</name>
    <dbReference type="NCBI Taxonomy" id="338969"/>
    <lineage>
        <taxon>Bacteria</taxon>
        <taxon>Pseudomonadati</taxon>
        <taxon>Pseudomonadota</taxon>
        <taxon>Betaproteobacteria</taxon>
        <taxon>Burkholderiales</taxon>
        <taxon>Comamonadaceae</taxon>
        <taxon>Rhodoferax</taxon>
    </lineage>
</organism>
<accession>Q21QN4</accession>
<keyword id="KW-1185">Reference proteome</keyword>
<keyword id="KW-0687">Ribonucleoprotein</keyword>
<keyword id="KW-0689">Ribosomal protein</keyword>
<keyword id="KW-0694">RNA-binding</keyword>
<keyword id="KW-0699">rRNA-binding</keyword>
<comment type="function">
    <text evidence="1">One of two assembly initiator proteins, it binds directly to the 5'-end of the 23S rRNA, where it nucleates assembly of the 50S subunit.</text>
</comment>
<comment type="function">
    <text evidence="1">One of the proteins that surrounds the polypeptide exit tunnel on the outside of the subunit.</text>
</comment>
<comment type="subunit">
    <text evidence="1">Part of the 50S ribosomal subunit.</text>
</comment>
<comment type="similarity">
    <text evidence="1">Belongs to the universal ribosomal protein uL24 family.</text>
</comment>
<feature type="chain" id="PRO_0000241650" description="Large ribosomal subunit protein uL24">
    <location>
        <begin position="1"/>
        <end position="106"/>
    </location>
</feature>
<dbReference type="EMBL" id="CP000267">
    <property type="protein sequence ID" value="ABD71919.1"/>
    <property type="molecule type" value="Genomic_DNA"/>
</dbReference>
<dbReference type="RefSeq" id="WP_011466476.1">
    <property type="nucleotide sequence ID" value="NC_007908.1"/>
</dbReference>
<dbReference type="SMR" id="Q21QN4"/>
<dbReference type="STRING" id="338969.Rfer_4232"/>
<dbReference type="KEGG" id="rfr:Rfer_4232"/>
<dbReference type="eggNOG" id="COG0198">
    <property type="taxonomic scope" value="Bacteria"/>
</dbReference>
<dbReference type="HOGENOM" id="CLU_093315_2_2_4"/>
<dbReference type="OrthoDB" id="9807419at2"/>
<dbReference type="Proteomes" id="UP000008332">
    <property type="component" value="Chromosome"/>
</dbReference>
<dbReference type="GO" id="GO:1990904">
    <property type="term" value="C:ribonucleoprotein complex"/>
    <property type="evidence" value="ECO:0007669"/>
    <property type="project" value="UniProtKB-KW"/>
</dbReference>
<dbReference type="GO" id="GO:0005840">
    <property type="term" value="C:ribosome"/>
    <property type="evidence" value="ECO:0007669"/>
    <property type="project" value="UniProtKB-KW"/>
</dbReference>
<dbReference type="GO" id="GO:0019843">
    <property type="term" value="F:rRNA binding"/>
    <property type="evidence" value="ECO:0007669"/>
    <property type="project" value="UniProtKB-UniRule"/>
</dbReference>
<dbReference type="GO" id="GO:0003735">
    <property type="term" value="F:structural constituent of ribosome"/>
    <property type="evidence" value="ECO:0007669"/>
    <property type="project" value="InterPro"/>
</dbReference>
<dbReference type="GO" id="GO:0006412">
    <property type="term" value="P:translation"/>
    <property type="evidence" value="ECO:0007669"/>
    <property type="project" value="UniProtKB-UniRule"/>
</dbReference>
<dbReference type="CDD" id="cd06089">
    <property type="entry name" value="KOW_RPL26"/>
    <property type="match status" value="1"/>
</dbReference>
<dbReference type="FunFam" id="2.30.30.30:FF:000004">
    <property type="entry name" value="50S ribosomal protein L24"/>
    <property type="match status" value="1"/>
</dbReference>
<dbReference type="Gene3D" id="2.30.30.30">
    <property type="match status" value="1"/>
</dbReference>
<dbReference type="HAMAP" id="MF_01326_B">
    <property type="entry name" value="Ribosomal_uL24_B"/>
    <property type="match status" value="1"/>
</dbReference>
<dbReference type="InterPro" id="IPR014722">
    <property type="entry name" value="Rib_uL2_dom2"/>
</dbReference>
<dbReference type="InterPro" id="IPR003256">
    <property type="entry name" value="Ribosomal_uL24"/>
</dbReference>
<dbReference type="InterPro" id="IPR005825">
    <property type="entry name" value="Ribosomal_uL24_CS"/>
</dbReference>
<dbReference type="InterPro" id="IPR041988">
    <property type="entry name" value="Ribosomal_uL24_KOW"/>
</dbReference>
<dbReference type="InterPro" id="IPR008991">
    <property type="entry name" value="Translation_prot_SH3-like_sf"/>
</dbReference>
<dbReference type="NCBIfam" id="TIGR01079">
    <property type="entry name" value="rplX_bact"/>
    <property type="match status" value="1"/>
</dbReference>
<dbReference type="PANTHER" id="PTHR12903">
    <property type="entry name" value="MITOCHONDRIAL RIBOSOMAL PROTEIN L24"/>
    <property type="match status" value="1"/>
</dbReference>
<dbReference type="Pfam" id="PF17136">
    <property type="entry name" value="ribosomal_L24"/>
    <property type="match status" value="1"/>
</dbReference>
<dbReference type="SUPFAM" id="SSF50104">
    <property type="entry name" value="Translation proteins SH3-like domain"/>
    <property type="match status" value="1"/>
</dbReference>
<dbReference type="PROSITE" id="PS01108">
    <property type="entry name" value="RIBOSOMAL_L24"/>
    <property type="match status" value="1"/>
</dbReference>
<gene>
    <name evidence="1" type="primary">rplX</name>
    <name type="ordered locus">Rfer_4232</name>
</gene>